<keyword id="KW-0046">Antibiotic resistance</keyword>
<keyword id="KW-0997">Cell inner membrane</keyword>
<keyword id="KW-1003">Cell membrane</keyword>
<keyword id="KW-0472">Membrane</keyword>
<keyword id="KW-1185">Reference proteome</keyword>
<keyword id="KW-0812">Transmembrane</keyword>
<keyword id="KW-1133">Transmembrane helix</keyword>
<keyword id="KW-0813">Transport</keyword>
<comment type="function">
    <text evidence="1">Confers resistance to norfloxacin and enoxacin.</text>
</comment>
<comment type="subcellular location">
    <subcellularLocation>
        <location evidence="1">Cell inner membrane</location>
        <topology evidence="1">Multi-pass membrane protein</topology>
    </subcellularLocation>
</comment>
<comment type="similarity">
    <text evidence="1">Belongs to the major facilitator superfamily. DHA1 family. MdtH (TC 2.A.1.2.21) subfamily.</text>
</comment>
<comment type="sequence caution" evidence="2">
    <conflict type="erroneous initiation">
        <sequence resource="EMBL-CDS" id="ABJ00450"/>
    </conflict>
</comment>
<dbReference type="EMBL" id="CP000468">
    <property type="protein sequence ID" value="ABJ00450.1"/>
    <property type="status" value="ALT_INIT"/>
    <property type="molecule type" value="Genomic_DNA"/>
</dbReference>
<dbReference type="RefSeq" id="WP_000092206.1">
    <property type="nucleotide sequence ID" value="NZ_CADILS010000019.1"/>
</dbReference>
<dbReference type="SMR" id="A1A9W0"/>
<dbReference type="GeneID" id="75203652"/>
<dbReference type="KEGG" id="ecv:APECO1_147"/>
<dbReference type="HOGENOM" id="CLU_001265_60_2_6"/>
<dbReference type="Proteomes" id="UP000008216">
    <property type="component" value="Chromosome"/>
</dbReference>
<dbReference type="GO" id="GO:0005886">
    <property type="term" value="C:plasma membrane"/>
    <property type="evidence" value="ECO:0007669"/>
    <property type="project" value="UniProtKB-SubCell"/>
</dbReference>
<dbReference type="GO" id="GO:0022857">
    <property type="term" value="F:transmembrane transporter activity"/>
    <property type="evidence" value="ECO:0007669"/>
    <property type="project" value="UniProtKB-UniRule"/>
</dbReference>
<dbReference type="GO" id="GO:0046677">
    <property type="term" value="P:response to antibiotic"/>
    <property type="evidence" value="ECO:0007669"/>
    <property type="project" value="UniProtKB-KW"/>
</dbReference>
<dbReference type="CDD" id="cd17329">
    <property type="entry name" value="MFS_MdtH_MDR_like"/>
    <property type="match status" value="1"/>
</dbReference>
<dbReference type="FunFam" id="1.20.1250.20:FF:000039">
    <property type="entry name" value="Multidrug resistance protein MdtH"/>
    <property type="match status" value="1"/>
</dbReference>
<dbReference type="Gene3D" id="1.20.1250.20">
    <property type="entry name" value="MFS general substrate transporter like domains"/>
    <property type="match status" value="1"/>
</dbReference>
<dbReference type="HAMAP" id="MF_01529">
    <property type="entry name" value="MFS_MdtH"/>
    <property type="match status" value="1"/>
</dbReference>
<dbReference type="InterPro" id="IPR011701">
    <property type="entry name" value="MFS"/>
</dbReference>
<dbReference type="InterPro" id="IPR020846">
    <property type="entry name" value="MFS_dom"/>
</dbReference>
<dbReference type="InterPro" id="IPR036259">
    <property type="entry name" value="MFS_trans_sf"/>
</dbReference>
<dbReference type="InterPro" id="IPR050171">
    <property type="entry name" value="MFS_Transporters"/>
</dbReference>
<dbReference type="InterPro" id="IPR022855">
    <property type="entry name" value="Multidrug-R_MdtH"/>
</dbReference>
<dbReference type="NCBIfam" id="NF008650">
    <property type="entry name" value="PRK11646.1"/>
    <property type="match status" value="1"/>
</dbReference>
<dbReference type="PANTHER" id="PTHR23517:SF2">
    <property type="entry name" value="MULTIDRUG RESISTANCE PROTEIN MDTH"/>
    <property type="match status" value="1"/>
</dbReference>
<dbReference type="PANTHER" id="PTHR23517">
    <property type="entry name" value="RESISTANCE PROTEIN MDTM, PUTATIVE-RELATED-RELATED"/>
    <property type="match status" value="1"/>
</dbReference>
<dbReference type="Pfam" id="PF07690">
    <property type="entry name" value="MFS_1"/>
    <property type="match status" value="1"/>
</dbReference>
<dbReference type="SUPFAM" id="SSF103473">
    <property type="entry name" value="MFS general substrate transporter"/>
    <property type="match status" value="1"/>
</dbReference>
<dbReference type="PROSITE" id="PS50850">
    <property type="entry name" value="MFS"/>
    <property type="match status" value="1"/>
</dbReference>
<name>MDTH_ECOK1</name>
<sequence length="402" mass="44363">MSRVSQARNLGKYFLLIDNMLVVLGFFVVFPLISIRFVDQMGWAAVMVGIALGLRQFIQQGLGIFGGAIADRFGAKPMIVTGMLMRAAGFATMGIAHEPWLLWFSCLLSGLGGTLFDPPRSALVVKLIRPQQRGRFFSLLMMQDSAGAVIGALLGSWLLQYDFRLVCATGAVLFVLCAAFNAWLLPAWKLSTVRTPVREGMTRVMRDKRFVTYVLTLAGYYMLAVQVMLMLPIMVNDVAGAPSAVKWMYAIEACLSLTLLYPIARWSEKHFRLEHRLMAGLLIMSLSMMPVGMVSGLQQLFTLICLFYIGSIIAEPARETLSASLADARARGSYMGFSRLGLAIGGAIGYIGGGWLFDLGKSAHQPELPWMMLGIIGIFTFLALGWQFSQKRAARRLLERDA</sequence>
<feature type="chain" id="PRO_0000280497" description="Multidrug resistance protein MdtH">
    <location>
        <begin position="1"/>
        <end position="402"/>
    </location>
</feature>
<feature type="topological domain" description="Cytoplasmic" evidence="1">
    <location>
        <begin position="1"/>
        <end position="12"/>
    </location>
</feature>
<feature type="transmembrane region" description="Helical" evidence="1">
    <location>
        <begin position="13"/>
        <end position="33"/>
    </location>
</feature>
<feature type="topological domain" description="Periplasmic" evidence="1">
    <location>
        <begin position="34"/>
        <end position="98"/>
    </location>
</feature>
<feature type="transmembrane region" description="Helical" evidence="1">
    <location>
        <begin position="99"/>
        <end position="116"/>
    </location>
</feature>
<feature type="topological domain" description="Cytoplasmic" evidence="1">
    <location>
        <begin position="117"/>
        <end position="138"/>
    </location>
</feature>
<feature type="transmembrane region" description="Helical" evidence="1">
    <location>
        <begin position="139"/>
        <end position="159"/>
    </location>
</feature>
<feature type="topological domain" description="Periplasmic" evidence="1">
    <location>
        <begin position="160"/>
        <end position="164"/>
    </location>
</feature>
<feature type="transmembrane region" description="Helical" evidence="1">
    <location>
        <begin position="165"/>
        <end position="185"/>
    </location>
</feature>
<feature type="topological domain" description="Cytoplasmic" evidence="1">
    <location>
        <begin position="186"/>
        <end position="213"/>
    </location>
</feature>
<feature type="transmembrane region" description="Helical" evidence="1">
    <location>
        <begin position="214"/>
        <end position="234"/>
    </location>
</feature>
<feature type="topological domain" description="Periplasmic" evidence="1">
    <location>
        <begin position="235"/>
        <end position="243"/>
    </location>
</feature>
<feature type="transmembrane region" description="Helical" evidence="1">
    <location>
        <begin position="244"/>
        <end position="264"/>
    </location>
</feature>
<feature type="topological domain" description="Cytoplasmic" evidence="1">
    <location>
        <begin position="265"/>
        <end position="276"/>
    </location>
</feature>
<feature type="transmembrane region" description="Helical" evidence="1">
    <location>
        <begin position="277"/>
        <end position="297"/>
    </location>
</feature>
<feature type="topological domain" description="Periplasmic" evidence="1">
    <location>
        <begin position="298"/>
        <end position="299"/>
    </location>
</feature>
<feature type="transmembrane region" description="Helical" evidence="1">
    <location>
        <begin position="300"/>
        <end position="320"/>
    </location>
</feature>
<feature type="topological domain" description="Cytoplasmic" evidence="1">
    <location>
        <begin position="321"/>
        <end position="339"/>
    </location>
</feature>
<feature type="transmembrane region" description="Helical" evidence="1">
    <location>
        <begin position="340"/>
        <end position="360"/>
    </location>
</feature>
<feature type="topological domain" description="Periplasmic" evidence="1">
    <location>
        <begin position="361"/>
        <end position="367"/>
    </location>
</feature>
<feature type="transmembrane region" description="Helical" evidence="1">
    <location>
        <begin position="368"/>
        <end position="388"/>
    </location>
</feature>
<feature type="topological domain" description="Cytoplasmic" evidence="1">
    <location>
        <begin position="389"/>
        <end position="402"/>
    </location>
</feature>
<accession>A1A9W0</accession>
<gene>
    <name evidence="1" type="primary">mdtH</name>
    <name type="ordered locus">Ecok1_09560</name>
    <name type="ORF">APECO1_147</name>
</gene>
<organism>
    <name type="scientific">Escherichia coli O1:K1 / APEC</name>
    <dbReference type="NCBI Taxonomy" id="405955"/>
    <lineage>
        <taxon>Bacteria</taxon>
        <taxon>Pseudomonadati</taxon>
        <taxon>Pseudomonadota</taxon>
        <taxon>Gammaproteobacteria</taxon>
        <taxon>Enterobacterales</taxon>
        <taxon>Enterobacteriaceae</taxon>
        <taxon>Escherichia</taxon>
    </lineage>
</organism>
<proteinExistence type="inferred from homology"/>
<reference key="1">
    <citation type="journal article" date="2007" name="J. Bacteriol.">
        <title>The genome sequence of avian pathogenic Escherichia coli strain O1:K1:H7 shares strong similarities with human extraintestinal pathogenic E. coli genomes.</title>
        <authorList>
            <person name="Johnson T.J."/>
            <person name="Kariyawasam S."/>
            <person name="Wannemuehler Y."/>
            <person name="Mangiamele P."/>
            <person name="Johnson S.J."/>
            <person name="Doetkott C."/>
            <person name="Skyberg J.A."/>
            <person name="Lynne A.M."/>
            <person name="Johnson J.R."/>
            <person name="Nolan L.K."/>
        </authorList>
    </citation>
    <scope>NUCLEOTIDE SEQUENCE [LARGE SCALE GENOMIC DNA]</scope>
</reference>
<protein>
    <recommendedName>
        <fullName evidence="1">Multidrug resistance protein MdtH</fullName>
    </recommendedName>
</protein>
<evidence type="ECO:0000255" key="1">
    <source>
        <dbReference type="HAMAP-Rule" id="MF_01529"/>
    </source>
</evidence>
<evidence type="ECO:0000305" key="2"/>